<feature type="chain" id="PRO_0000273264" description="Putative carbonic anhydrase">
    <location>
        <begin position="1"/>
        <end position="17" status="greater than"/>
    </location>
</feature>
<feature type="non-terminal residue" evidence="2">
    <location>
        <position position="17"/>
    </location>
</feature>
<protein>
    <recommendedName>
        <fullName>Putative carbonic anhydrase</fullName>
        <ecNumber>4.2.1.1</ecNumber>
    </recommendedName>
    <alternativeName>
        <fullName>Carbonate dehydratase</fullName>
    </alternativeName>
</protein>
<organism>
    <name type="scientific">Streptococcus thermophilus</name>
    <dbReference type="NCBI Taxonomy" id="1308"/>
    <lineage>
        <taxon>Bacteria</taxon>
        <taxon>Bacillati</taxon>
        <taxon>Bacillota</taxon>
        <taxon>Bacilli</taxon>
        <taxon>Lactobacillales</taxon>
        <taxon>Streptococcaceae</taxon>
        <taxon>Streptococcus</taxon>
    </lineage>
</organism>
<sequence>XXFENFLNANXAYVNLD</sequence>
<evidence type="ECO:0000269" key="1">
    <source ref="1"/>
</evidence>
<evidence type="ECO:0000303" key="2">
    <source ref="1"/>
</evidence>
<evidence type="ECO:0000305" key="3"/>
<keyword id="KW-0903">Direct protein sequencing</keyword>
<keyword id="KW-0456">Lyase</keyword>
<accession>P83329</accession>
<comment type="catalytic activity">
    <reaction>
        <text>hydrogencarbonate + H(+) = CO2 + H2O</text>
        <dbReference type="Rhea" id="RHEA:10748"/>
        <dbReference type="ChEBI" id="CHEBI:15377"/>
        <dbReference type="ChEBI" id="CHEBI:15378"/>
        <dbReference type="ChEBI" id="CHEBI:16526"/>
        <dbReference type="ChEBI" id="CHEBI:17544"/>
        <dbReference type="EC" id="4.2.1.1"/>
    </reaction>
</comment>
<comment type="similarity">
    <text evidence="3">Belongs to the beta-class carbonic anhydrase family.</text>
</comment>
<dbReference type="EC" id="4.2.1.1"/>
<dbReference type="GO" id="GO:0004089">
    <property type="term" value="F:carbonate dehydratase activity"/>
    <property type="evidence" value="ECO:0007669"/>
    <property type="project" value="UniProtKB-EC"/>
</dbReference>
<name>CYNT_STRTR</name>
<proteinExistence type="evidence at protein level"/>
<reference evidence="3" key="1">
    <citation type="journal article" date="2002" name="Lait">
        <title>Comparative study of the protein composition of three strains of Streptococcus thermophilus grown either in M17 medium or in milk.</title>
        <authorList>
            <person name="Guimont C."/>
            <person name="Chopard M.-A."/>
            <person name="Gaillard J.-L."/>
            <person name="Chamba J.-F."/>
        </authorList>
    </citation>
    <scope>PROTEIN SEQUENCE</scope>
    <source>
        <strain evidence="1">ITGST82</strain>
    </source>
</reference>